<proteinExistence type="inferred from homology"/>
<organism>
    <name type="scientific">Thermobifida fusca (strain YX)</name>
    <dbReference type="NCBI Taxonomy" id="269800"/>
    <lineage>
        <taxon>Bacteria</taxon>
        <taxon>Bacillati</taxon>
        <taxon>Actinomycetota</taxon>
        <taxon>Actinomycetes</taxon>
        <taxon>Streptosporangiales</taxon>
        <taxon>Nocardiopsidaceae</taxon>
        <taxon>Thermobifida</taxon>
    </lineage>
</organism>
<comment type="function">
    <text evidence="1">Catalyzes the attachment of isoleucine to tRNA(Ile). As IleRS can inadvertently accommodate and process structurally similar amino acids such as valine, to avoid such errors it has two additional distinct tRNA(Ile)-dependent editing activities. One activity is designated as 'pretransfer' editing and involves the hydrolysis of activated Val-AMP. The other activity is designated 'posttransfer' editing and involves deacylation of mischarged Val-tRNA(Ile).</text>
</comment>
<comment type="catalytic activity">
    <reaction evidence="1">
        <text>tRNA(Ile) + L-isoleucine + ATP = L-isoleucyl-tRNA(Ile) + AMP + diphosphate</text>
        <dbReference type="Rhea" id="RHEA:11060"/>
        <dbReference type="Rhea" id="RHEA-COMP:9666"/>
        <dbReference type="Rhea" id="RHEA-COMP:9695"/>
        <dbReference type="ChEBI" id="CHEBI:30616"/>
        <dbReference type="ChEBI" id="CHEBI:33019"/>
        <dbReference type="ChEBI" id="CHEBI:58045"/>
        <dbReference type="ChEBI" id="CHEBI:78442"/>
        <dbReference type="ChEBI" id="CHEBI:78528"/>
        <dbReference type="ChEBI" id="CHEBI:456215"/>
        <dbReference type="EC" id="6.1.1.5"/>
    </reaction>
</comment>
<comment type="cofactor">
    <cofactor evidence="1">
        <name>Zn(2+)</name>
        <dbReference type="ChEBI" id="CHEBI:29105"/>
    </cofactor>
</comment>
<comment type="subunit">
    <text evidence="1">Monomer.</text>
</comment>
<comment type="subcellular location">
    <subcellularLocation>
        <location evidence="1">Cytoplasm</location>
    </subcellularLocation>
</comment>
<comment type="domain">
    <text evidence="1">IleRS has two distinct active sites: one for aminoacylation and one for editing. The misactivated valine is translocated from the active site to the editing site, which sterically excludes the correctly activated isoleucine. The single editing site contains two valyl binding pockets, one specific for each substrate (Val-AMP or Val-tRNA(Ile)).</text>
</comment>
<comment type="similarity">
    <text evidence="1">Belongs to the class-I aminoacyl-tRNA synthetase family. IleS type 2 subfamily.</text>
</comment>
<evidence type="ECO:0000255" key="1">
    <source>
        <dbReference type="HAMAP-Rule" id="MF_02003"/>
    </source>
</evidence>
<accession>Q47QV9</accession>
<reference key="1">
    <citation type="journal article" date="2007" name="J. Bacteriol.">
        <title>Genome sequence and analysis of the soil cellulolytic actinomycete Thermobifida fusca YX.</title>
        <authorList>
            <person name="Lykidis A."/>
            <person name="Mavromatis K."/>
            <person name="Ivanova N."/>
            <person name="Anderson I."/>
            <person name="Land M."/>
            <person name="DiBartolo G."/>
            <person name="Martinez M."/>
            <person name="Lapidus A."/>
            <person name="Lucas S."/>
            <person name="Copeland A."/>
            <person name="Richardson P."/>
            <person name="Wilson D.B."/>
            <person name="Kyrpides N."/>
        </authorList>
    </citation>
    <scope>NUCLEOTIDE SEQUENCE [LARGE SCALE GENOMIC DNA]</scope>
    <source>
        <strain>YX</strain>
    </source>
</reference>
<gene>
    <name evidence="1" type="primary">ileS</name>
    <name type="ordered locus">Tfu_1120</name>
</gene>
<keyword id="KW-0030">Aminoacyl-tRNA synthetase</keyword>
<keyword id="KW-0067">ATP-binding</keyword>
<keyword id="KW-0963">Cytoplasm</keyword>
<keyword id="KW-0436">Ligase</keyword>
<keyword id="KW-0479">Metal-binding</keyword>
<keyword id="KW-0547">Nucleotide-binding</keyword>
<keyword id="KW-0648">Protein biosynthesis</keyword>
<keyword id="KW-0862">Zinc</keyword>
<dbReference type="EC" id="6.1.1.5" evidence="1"/>
<dbReference type="EMBL" id="CP000088">
    <property type="protein sequence ID" value="AAZ55158.1"/>
    <property type="molecule type" value="Genomic_DNA"/>
</dbReference>
<dbReference type="RefSeq" id="WP_011291567.1">
    <property type="nucleotide sequence ID" value="NC_007333.1"/>
</dbReference>
<dbReference type="SMR" id="Q47QV9"/>
<dbReference type="STRING" id="269800.Tfu_1120"/>
<dbReference type="KEGG" id="tfu:Tfu_1120"/>
<dbReference type="eggNOG" id="COG0060">
    <property type="taxonomic scope" value="Bacteria"/>
</dbReference>
<dbReference type="HOGENOM" id="CLU_001493_1_1_11"/>
<dbReference type="OrthoDB" id="9810365at2"/>
<dbReference type="GO" id="GO:0005737">
    <property type="term" value="C:cytoplasm"/>
    <property type="evidence" value="ECO:0007669"/>
    <property type="project" value="UniProtKB-SubCell"/>
</dbReference>
<dbReference type="GO" id="GO:0002161">
    <property type="term" value="F:aminoacyl-tRNA deacylase activity"/>
    <property type="evidence" value="ECO:0007669"/>
    <property type="project" value="InterPro"/>
</dbReference>
<dbReference type="GO" id="GO:0005524">
    <property type="term" value="F:ATP binding"/>
    <property type="evidence" value="ECO:0007669"/>
    <property type="project" value="UniProtKB-UniRule"/>
</dbReference>
<dbReference type="GO" id="GO:0004822">
    <property type="term" value="F:isoleucine-tRNA ligase activity"/>
    <property type="evidence" value="ECO:0007669"/>
    <property type="project" value="UniProtKB-UniRule"/>
</dbReference>
<dbReference type="GO" id="GO:0000049">
    <property type="term" value="F:tRNA binding"/>
    <property type="evidence" value="ECO:0007669"/>
    <property type="project" value="InterPro"/>
</dbReference>
<dbReference type="GO" id="GO:0008270">
    <property type="term" value="F:zinc ion binding"/>
    <property type="evidence" value="ECO:0007669"/>
    <property type="project" value="UniProtKB-UniRule"/>
</dbReference>
<dbReference type="GO" id="GO:0006428">
    <property type="term" value="P:isoleucyl-tRNA aminoacylation"/>
    <property type="evidence" value="ECO:0007669"/>
    <property type="project" value="UniProtKB-UniRule"/>
</dbReference>
<dbReference type="CDD" id="cd07961">
    <property type="entry name" value="Anticodon_Ia_Ile_ABEc"/>
    <property type="match status" value="1"/>
</dbReference>
<dbReference type="CDD" id="cd00818">
    <property type="entry name" value="IleRS_core"/>
    <property type="match status" value="1"/>
</dbReference>
<dbReference type="FunFam" id="3.40.50.620:FF:000063">
    <property type="entry name" value="Isoleucine--tRNA ligase"/>
    <property type="match status" value="1"/>
</dbReference>
<dbReference type="FunFam" id="3.40.50.620:FF:000075">
    <property type="entry name" value="Isoleucine--tRNA ligase"/>
    <property type="match status" value="1"/>
</dbReference>
<dbReference type="FunFam" id="3.90.740.10:FF:000016">
    <property type="entry name" value="Isoleucine--tRNA ligase"/>
    <property type="match status" value="1"/>
</dbReference>
<dbReference type="Gene3D" id="3.40.50.620">
    <property type="entry name" value="HUPs"/>
    <property type="match status" value="2"/>
</dbReference>
<dbReference type="Gene3D" id="1.10.730.10">
    <property type="entry name" value="Isoleucyl-tRNA Synthetase, Domain 1"/>
    <property type="match status" value="1"/>
</dbReference>
<dbReference type="Gene3D" id="3.90.740.10">
    <property type="entry name" value="Valyl/Leucyl/Isoleucyl-tRNA synthetase, editing domain"/>
    <property type="match status" value="1"/>
</dbReference>
<dbReference type="HAMAP" id="MF_02003">
    <property type="entry name" value="Ile_tRNA_synth_type2"/>
    <property type="match status" value="1"/>
</dbReference>
<dbReference type="InterPro" id="IPR002300">
    <property type="entry name" value="aa-tRNA-synth_Ia"/>
</dbReference>
<dbReference type="InterPro" id="IPR033709">
    <property type="entry name" value="Anticodon_Ile_ABEc"/>
</dbReference>
<dbReference type="InterPro" id="IPR002301">
    <property type="entry name" value="Ile-tRNA-ligase"/>
</dbReference>
<dbReference type="InterPro" id="IPR023586">
    <property type="entry name" value="Ile-tRNA-ligase_type2"/>
</dbReference>
<dbReference type="InterPro" id="IPR013155">
    <property type="entry name" value="M/V/L/I-tRNA-synth_anticd-bd"/>
</dbReference>
<dbReference type="InterPro" id="IPR014729">
    <property type="entry name" value="Rossmann-like_a/b/a_fold"/>
</dbReference>
<dbReference type="InterPro" id="IPR009080">
    <property type="entry name" value="tRNAsynth_Ia_anticodon-bd"/>
</dbReference>
<dbReference type="InterPro" id="IPR009008">
    <property type="entry name" value="Val/Leu/Ile-tRNA-synth_edit"/>
</dbReference>
<dbReference type="NCBIfam" id="TIGR00392">
    <property type="entry name" value="ileS"/>
    <property type="match status" value="1"/>
</dbReference>
<dbReference type="PANTHER" id="PTHR42780:SF1">
    <property type="entry name" value="ISOLEUCINE--TRNA LIGASE, CYTOPLASMIC"/>
    <property type="match status" value="1"/>
</dbReference>
<dbReference type="PANTHER" id="PTHR42780">
    <property type="entry name" value="SOLEUCYL-TRNA SYNTHETASE"/>
    <property type="match status" value="1"/>
</dbReference>
<dbReference type="Pfam" id="PF08264">
    <property type="entry name" value="Anticodon_1"/>
    <property type="match status" value="1"/>
</dbReference>
<dbReference type="Pfam" id="PF19302">
    <property type="entry name" value="DUF5915"/>
    <property type="match status" value="1"/>
</dbReference>
<dbReference type="Pfam" id="PF00133">
    <property type="entry name" value="tRNA-synt_1"/>
    <property type="match status" value="1"/>
</dbReference>
<dbReference type="PRINTS" id="PR00984">
    <property type="entry name" value="TRNASYNTHILE"/>
</dbReference>
<dbReference type="SUPFAM" id="SSF47323">
    <property type="entry name" value="Anticodon-binding domain of a subclass of class I aminoacyl-tRNA synthetases"/>
    <property type="match status" value="1"/>
</dbReference>
<dbReference type="SUPFAM" id="SSF52374">
    <property type="entry name" value="Nucleotidylyl transferase"/>
    <property type="match status" value="1"/>
</dbReference>
<dbReference type="SUPFAM" id="SSF50677">
    <property type="entry name" value="ValRS/IleRS/LeuRS editing domain"/>
    <property type="match status" value="1"/>
</dbReference>
<feature type="chain" id="PRO_0000098565" description="Isoleucine--tRNA ligase">
    <location>
        <begin position="1"/>
        <end position="1060"/>
    </location>
</feature>
<feature type="short sequence motif" description="'HIGH' region">
    <location>
        <begin position="55"/>
        <end position="65"/>
    </location>
</feature>
<feature type="short sequence motif" description="'KMSKS' region">
    <location>
        <begin position="608"/>
        <end position="612"/>
    </location>
</feature>
<feature type="binding site" evidence="1">
    <location>
        <position position="611"/>
    </location>
    <ligand>
        <name>ATP</name>
        <dbReference type="ChEBI" id="CHEBI:30616"/>
    </ligand>
</feature>
<name>SYI_THEFY</name>
<protein>
    <recommendedName>
        <fullName evidence="1">Isoleucine--tRNA ligase</fullName>
        <ecNumber evidence="1">6.1.1.5</ecNumber>
    </recommendedName>
    <alternativeName>
        <fullName evidence="1">Isoleucyl-tRNA synthetase</fullName>
        <shortName evidence="1">IleRS</shortName>
    </alternativeName>
</protein>
<sequence>MSKESTRPFPTLPAQIDLPAMEHEVLRRWEEHKIFERSLEQTQGGPTWVFYEGPPTANGTPGVHHVEARVFKDVFPRFKTMKGFYVERKAGWDCHGLPVEVAVEKELGISGKKDIEAFGIAEFNARCRESVLRNVDAFTEMTRRMGYWVNMDEAYRTMDREYVESVWWAIKQIWDKGLLVQDYRISPYCPRCGTTLSDHELAQGYETVTDPSVYVRFPLTSGPLAGQAALLVWTTTPWTLVSNTAVAVHPEVDYVVATDGSEQLVVAEPLVGAALGDGWTLTGQRFKGAELERWTYQRPFELVEFDSPAHFVVLGDYVTVEDGTGLVHQAPAFGADDMQVCRAYGLPVVNPVRNDGTFEEHLDLVGDEFFKTADAALVADLKDRGLLFKHLDYEHSYPHCWRCHTPLMYYAVPSWYIKTTAIKDQLLAENAKTNWVPANVKDGRYGEWLRNNVDWALSRSRYWGTPLPIWEFPDGRRICVGSLKELSELSGQDLSDLDPHRPYVDDIVIPDPDADPSLPLEQRVARRVPEVIDVWFDSGAMPFAQWGAPHRNQEKFEANFPAQYICEAIDQTRGWFYSLMAVSTLVFGRSSYENVVCLGHILAEDGRKMSKHLGNILEPIPVMDRHGADALRWFMAASGSPWMPRRVGHTVLEEIVRKVLLTYYNSASFFTLYAGAGDGWSHEQLADAPAPQDRPLLDRWILSELHSLIKTVDDALERFDTALAGRALTTFIDDLSNWYVRRSRRRFWAGAGTPEGAAAFATLFECLETLTLLMAPIVPFITDHVWQALRRPDAPESVHLASWPKADESLIDPALSEQMALVRRLVELGRAARVDSGQRVRQPLARALVGAPGFAELPEQLRAQIAEELNVVQLDPLSVVGGDLVDYSVKPNFRALGKRFGKTTPRVAQAIREADAKTLVERLRADNAATVDVDGEQVVLSADEVVVTEQPREGWTVASEAGETVALDLELTPELRRAGVAREVIRLVQDARKSSGLNISDRIHLWWSATDEMTAQAMAEHAEAISSEVLAVSFTEGTGDADAYEVVSEEFGITLRLRKA</sequence>